<sequence length="385" mass="42015">MSWQQRVDDALTARRATDTLRRRYVVSQGAGRWLVANGRQYLNFSSNDYLGLSQHPQIIRAWQQAAIRFGVGSGGSGHISGYSVAHQALEEELAQWLGYPRALLFISGFAANQAVITALMKKNDRIVADRLSHASLLEAANLSPAQLRRFIHNDTQHLSRLLQSPCVGQQLVVTEGVYSMDGDSAPLAEIQHIARRHHAWLLVDDAHGIGVTGDEGRGTCWQRGVKPELLVVTFGKGFGVSGAAVLCSESVADYLLQFARHLVYSTSMPPAQAQALSASLAVIRSDEGGERREKLAALVQRFRAGVNASRFTLLNAHSAIQPLIVGDNSRALRLAEALRQQGCWAMAIRPPTVPVGTARLRLTLTQAHEACDIDRLLEVLHGTGE</sequence>
<comment type="function">
    <text evidence="1">Catalyzes the decarboxylative condensation of pimeloyl-[acyl-carrier protein] and L-alanine to produce 8-amino-7-oxononanoate (AON), [acyl-carrier protein], and carbon dioxide.</text>
</comment>
<comment type="catalytic activity">
    <reaction evidence="1">
        <text>6-carboxyhexanoyl-[ACP] + L-alanine + H(+) = (8S)-8-amino-7-oxononanoate + holo-[ACP] + CO2</text>
        <dbReference type="Rhea" id="RHEA:42288"/>
        <dbReference type="Rhea" id="RHEA-COMP:9685"/>
        <dbReference type="Rhea" id="RHEA-COMP:9955"/>
        <dbReference type="ChEBI" id="CHEBI:15378"/>
        <dbReference type="ChEBI" id="CHEBI:16526"/>
        <dbReference type="ChEBI" id="CHEBI:57972"/>
        <dbReference type="ChEBI" id="CHEBI:64479"/>
        <dbReference type="ChEBI" id="CHEBI:78846"/>
        <dbReference type="ChEBI" id="CHEBI:149468"/>
        <dbReference type="EC" id="2.3.1.47"/>
    </reaction>
</comment>
<comment type="cofactor">
    <cofactor evidence="1">
        <name>pyridoxal 5'-phosphate</name>
        <dbReference type="ChEBI" id="CHEBI:597326"/>
    </cofactor>
</comment>
<comment type="pathway">
    <text evidence="1">Cofactor biosynthesis; biotin biosynthesis.</text>
</comment>
<comment type="subunit">
    <text evidence="1">Homodimer.</text>
</comment>
<comment type="similarity">
    <text evidence="1">Belongs to the class-II pyridoxal-phosphate-dependent aminotransferase family. BioF subfamily.</text>
</comment>
<protein>
    <recommendedName>
        <fullName evidence="1">8-amino-7-oxononanoate synthase</fullName>
        <shortName evidence="1">AONS</shortName>
        <ecNumber evidence="1">2.3.1.47</ecNumber>
    </recommendedName>
    <alternativeName>
        <fullName evidence="1">7-keto-8-amino-pelargonic acid synthase</fullName>
        <shortName evidence="1">7-KAP synthase</shortName>
        <shortName evidence="1">KAPA synthase</shortName>
    </alternativeName>
    <alternativeName>
        <fullName evidence="1">8-amino-7-ketopelargonate synthase</fullName>
    </alternativeName>
</protein>
<keyword id="KW-0093">Biotin biosynthesis</keyword>
<keyword id="KW-0663">Pyridoxal phosphate</keyword>
<keyword id="KW-0808">Transferase</keyword>
<reference key="1">
    <citation type="journal article" date="2011" name="J. Bacteriol.">
        <title>Comparative genomics of 28 Salmonella enterica isolates: evidence for CRISPR-mediated adaptive sublineage evolution.</title>
        <authorList>
            <person name="Fricke W.F."/>
            <person name="Mammel M.K."/>
            <person name="McDermott P.F."/>
            <person name="Tartera C."/>
            <person name="White D.G."/>
            <person name="Leclerc J.E."/>
            <person name="Ravel J."/>
            <person name="Cebula T.A."/>
        </authorList>
    </citation>
    <scope>NUCLEOTIDE SEQUENCE [LARGE SCALE GENOMIC DNA]</scope>
    <source>
        <strain>SL483</strain>
    </source>
</reference>
<proteinExistence type="inferred from homology"/>
<gene>
    <name evidence="1" type="primary">bioF</name>
    <name type="ordered locus">SeAg_B0831</name>
</gene>
<feature type="chain" id="PRO_0000381092" description="8-amino-7-oxononanoate synthase">
    <location>
        <begin position="1"/>
        <end position="385"/>
    </location>
</feature>
<feature type="binding site" evidence="1">
    <location>
        <position position="21"/>
    </location>
    <ligand>
        <name>substrate</name>
    </ligand>
</feature>
<feature type="binding site" evidence="1">
    <location>
        <begin position="108"/>
        <end position="109"/>
    </location>
    <ligand>
        <name>pyridoxal 5'-phosphate</name>
        <dbReference type="ChEBI" id="CHEBI:597326"/>
    </ligand>
</feature>
<feature type="binding site" evidence="1">
    <location>
        <position position="133"/>
    </location>
    <ligand>
        <name>substrate</name>
    </ligand>
</feature>
<feature type="binding site" evidence="1">
    <location>
        <position position="179"/>
    </location>
    <ligand>
        <name>pyridoxal 5'-phosphate</name>
        <dbReference type="ChEBI" id="CHEBI:597326"/>
    </ligand>
</feature>
<feature type="binding site" evidence="1">
    <location>
        <position position="207"/>
    </location>
    <ligand>
        <name>pyridoxal 5'-phosphate</name>
        <dbReference type="ChEBI" id="CHEBI:597326"/>
    </ligand>
</feature>
<feature type="binding site" evidence="1">
    <location>
        <position position="233"/>
    </location>
    <ligand>
        <name>pyridoxal 5'-phosphate</name>
        <dbReference type="ChEBI" id="CHEBI:597326"/>
    </ligand>
</feature>
<feature type="binding site" evidence="1">
    <location>
        <position position="352"/>
    </location>
    <ligand>
        <name>substrate</name>
    </ligand>
</feature>
<feature type="modified residue" description="N6-(pyridoxal phosphate)lysine" evidence="1">
    <location>
        <position position="236"/>
    </location>
</feature>
<name>BIOF_SALA4</name>
<evidence type="ECO:0000255" key="1">
    <source>
        <dbReference type="HAMAP-Rule" id="MF_01693"/>
    </source>
</evidence>
<organism>
    <name type="scientific">Salmonella agona (strain SL483)</name>
    <dbReference type="NCBI Taxonomy" id="454166"/>
    <lineage>
        <taxon>Bacteria</taxon>
        <taxon>Pseudomonadati</taxon>
        <taxon>Pseudomonadota</taxon>
        <taxon>Gammaproteobacteria</taxon>
        <taxon>Enterobacterales</taxon>
        <taxon>Enterobacteriaceae</taxon>
        <taxon>Salmonella</taxon>
    </lineage>
</organism>
<dbReference type="EC" id="2.3.1.47" evidence="1"/>
<dbReference type="EMBL" id="CP001138">
    <property type="protein sequence ID" value="ACH49235.1"/>
    <property type="molecule type" value="Genomic_DNA"/>
</dbReference>
<dbReference type="RefSeq" id="WP_000118931.1">
    <property type="nucleotide sequence ID" value="NC_011149.1"/>
</dbReference>
<dbReference type="SMR" id="B5F073"/>
<dbReference type="KEGG" id="sea:SeAg_B0831"/>
<dbReference type="HOGENOM" id="CLU_015846_11_2_6"/>
<dbReference type="UniPathway" id="UPA00078"/>
<dbReference type="Proteomes" id="UP000008819">
    <property type="component" value="Chromosome"/>
</dbReference>
<dbReference type="GO" id="GO:0008710">
    <property type="term" value="F:8-amino-7-oxononanoate synthase activity"/>
    <property type="evidence" value="ECO:0007669"/>
    <property type="project" value="UniProtKB-UniRule"/>
</dbReference>
<dbReference type="GO" id="GO:0030170">
    <property type="term" value="F:pyridoxal phosphate binding"/>
    <property type="evidence" value="ECO:0007669"/>
    <property type="project" value="UniProtKB-UniRule"/>
</dbReference>
<dbReference type="GO" id="GO:0009102">
    <property type="term" value="P:biotin biosynthetic process"/>
    <property type="evidence" value="ECO:0007669"/>
    <property type="project" value="UniProtKB-UniRule"/>
</dbReference>
<dbReference type="CDD" id="cd06454">
    <property type="entry name" value="KBL_like"/>
    <property type="match status" value="1"/>
</dbReference>
<dbReference type="FunFam" id="3.40.640.10:FF:000095">
    <property type="entry name" value="8-amino-7-oxononanoate synthase"/>
    <property type="match status" value="1"/>
</dbReference>
<dbReference type="Gene3D" id="3.90.1150.10">
    <property type="entry name" value="Aspartate Aminotransferase, domain 1"/>
    <property type="match status" value="1"/>
</dbReference>
<dbReference type="Gene3D" id="3.40.640.10">
    <property type="entry name" value="Type I PLP-dependent aspartate aminotransferase-like (Major domain)"/>
    <property type="match status" value="1"/>
</dbReference>
<dbReference type="HAMAP" id="MF_01693">
    <property type="entry name" value="BioF_aminotrans_2"/>
    <property type="match status" value="1"/>
</dbReference>
<dbReference type="InterPro" id="IPR001917">
    <property type="entry name" value="Aminotrans_II_pyridoxalP_BS"/>
</dbReference>
<dbReference type="InterPro" id="IPR004839">
    <property type="entry name" value="Aminotransferase_I/II_large"/>
</dbReference>
<dbReference type="InterPro" id="IPR050087">
    <property type="entry name" value="AON_synthase_class-II"/>
</dbReference>
<dbReference type="InterPro" id="IPR004723">
    <property type="entry name" value="AONS_Archaea/Proteobacteria"/>
</dbReference>
<dbReference type="InterPro" id="IPR022834">
    <property type="entry name" value="AONS_Proteobacteria"/>
</dbReference>
<dbReference type="InterPro" id="IPR015424">
    <property type="entry name" value="PyrdxlP-dep_Trfase"/>
</dbReference>
<dbReference type="InterPro" id="IPR015421">
    <property type="entry name" value="PyrdxlP-dep_Trfase_major"/>
</dbReference>
<dbReference type="InterPro" id="IPR015422">
    <property type="entry name" value="PyrdxlP-dep_Trfase_small"/>
</dbReference>
<dbReference type="NCBIfam" id="TIGR00858">
    <property type="entry name" value="bioF"/>
    <property type="match status" value="1"/>
</dbReference>
<dbReference type="PANTHER" id="PTHR13693:SF100">
    <property type="entry name" value="8-AMINO-7-OXONONANOATE SYNTHASE"/>
    <property type="match status" value="1"/>
</dbReference>
<dbReference type="PANTHER" id="PTHR13693">
    <property type="entry name" value="CLASS II AMINOTRANSFERASE/8-AMINO-7-OXONONANOATE SYNTHASE"/>
    <property type="match status" value="1"/>
</dbReference>
<dbReference type="Pfam" id="PF00155">
    <property type="entry name" value="Aminotran_1_2"/>
    <property type="match status" value="1"/>
</dbReference>
<dbReference type="SUPFAM" id="SSF53383">
    <property type="entry name" value="PLP-dependent transferases"/>
    <property type="match status" value="1"/>
</dbReference>
<dbReference type="PROSITE" id="PS00599">
    <property type="entry name" value="AA_TRANSFER_CLASS_2"/>
    <property type="match status" value="1"/>
</dbReference>
<accession>B5F073</accession>